<sequence length="390" mass="42491">MSKHNWTLETQLVHNPFKTDGGTGAVSVPIQHASTFHQSSFEEFGAYDYSRSGTPTRTALEETIAALEGGTRGFAFSSGMAAISTAFLLLSQGDHVLVTEDVYGGTFRMVTEVLTRFGIEHTFVDMTDRNEVARSIKPNTKVIYMETPSNPTLGITDIKAVVQLAKENGCLTFLDNTFMTPALQRPLDLGVDIVLHSATKFLSGHSDVLSGLAAVKDEELGKQLYKLQNAFGAVLGVQDCWLVLRGLKTLQVRLEKASQTAQRLAEFFQKHPAVKRVYYPGLADHPGAETHKSQSTGAGAVLSFELESKEAVKKLVENVSLPVFAVSLGAVESILSYPATMSHAAMPKEEREKRGITDGLLRLSVGVEHADDLEHDFEQALKEIAPVSVR</sequence>
<keyword id="KW-0028">Amino-acid biosynthesis</keyword>
<keyword id="KW-0963">Cytoplasm</keyword>
<keyword id="KW-0456">Lyase</keyword>
<keyword id="KW-0486">Methionine biosynthesis</keyword>
<keyword id="KW-0663">Pyridoxal phosphate</keyword>
<keyword id="KW-1185">Reference proteome</keyword>
<dbReference type="EC" id="4.4.1.13"/>
<dbReference type="EMBL" id="AL009126">
    <property type="protein sequence ID" value="CAB13045.1"/>
    <property type="molecule type" value="Genomic_DNA"/>
</dbReference>
<dbReference type="PIR" id="B69847">
    <property type="entry name" value="B69847"/>
</dbReference>
<dbReference type="RefSeq" id="NP_389070.1">
    <property type="nucleotide sequence ID" value="NC_000964.3"/>
</dbReference>
<dbReference type="RefSeq" id="WP_003244787.1">
    <property type="nucleotide sequence ID" value="NZ_OZ025638.1"/>
</dbReference>
<dbReference type="SMR" id="O31632"/>
<dbReference type="FunCoup" id="O31632">
    <property type="interactions" value="578"/>
</dbReference>
<dbReference type="STRING" id="224308.BSU11880"/>
<dbReference type="PaxDb" id="224308-BSU11880"/>
<dbReference type="EnsemblBacteria" id="CAB13045">
    <property type="protein sequence ID" value="CAB13045"/>
    <property type="gene ID" value="BSU_11880"/>
</dbReference>
<dbReference type="GeneID" id="936424"/>
<dbReference type="KEGG" id="bsu:BSU11880"/>
<dbReference type="PATRIC" id="fig|224308.179.peg.1280"/>
<dbReference type="eggNOG" id="COG0626">
    <property type="taxonomic scope" value="Bacteria"/>
</dbReference>
<dbReference type="InParanoid" id="O31632"/>
<dbReference type="OrthoDB" id="9803887at2"/>
<dbReference type="PhylomeDB" id="O31632"/>
<dbReference type="BioCyc" id="BSUB:BSU11880-MONOMER"/>
<dbReference type="SABIO-RK" id="O31632"/>
<dbReference type="UniPathway" id="UPA00051">
    <property type="reaction ID" value="UER00078"/>
</dbReference>
<dbReference type="Proteomes" id="UP000001570">
    <property type="component" value="Chromosome"/>
</dbReference>
<dbReference type="GO" id="GO:0005737">
    <property type="term" value="C:cytoplasm"/>
    <property type="evidence" value="ECO:0000318"/>
    <property type="project" value="GO_Central"/>
</dbReference>
<dbReference type="GO" id="GO:0016846">
    <property type="term" value="F:carbon-sulfur lyase activity"/>
    <property type="evidence" value="ECO:0000318"/>
    <property type="project" value="GO_Central"/>
</dbReference>
<dbReference type="GO" id="GO:0047804">
    <property type="term" value="F:cysteine-S-conjugate beta-lyase activity"/>
    <property type="evidence" value="ECO:0007669"/>
    <property type="project" value="UniProtKB-EC"/>
</dbReference>
<dbReference type="GO" id="GO:0030170">
    <property type="term" value="F:pyridoxal phosphate binding"/>
    <property type="evidence" value="ECO:0000318"/>
    <property type="project" value="GO_Central"/>
</dbReference>
<dbReference type="GO" id="GO:0009086">
    <property type="term" value="P:methionine biosynthetic process"/>
    <property type="evidence" value="ECO:0007669"/>
    <property type="project" value="UniProtKB-KW"/>
</dbReference>
<dbReference type="GO" id="GO:0019346">
    <property type="term" value="P:transsulfuration"/>
    <property type="evidence" value="ECO:0000318"/>
    <property type="project" value="GO_Central"/>
</dbReference>
<dbReference type="CDD" id="cd00614">
    <property type="entry name" value="CGS_like"/>
    <property type="match status" value="1"/>
</dbReference>
<dbReference type="FunFam" id="3.90.1150.10:FF:000033">
    <property type="entry name" value="Cystathionine gamma-synthase"/>
    <property type="match status" value="1"/>
</dbReference>
<dbReference type="FunFam" id="3.40.640.10:FF:000009">
    <property type="entry name" value="Cystathionine gamma-synthase homolog"/>
    <property type="match status" value="1"/>
</dbReference>
<dbReference type="Gene3D" id="3.90.1150.10">
    <property type="entry name" value="Aspartate Aminotransferase, domain 1"/>
    <property type="match status" value="1"/>
</dbReference>
<dbReference type="Gene3D" id="3.40.640.10">
    <property type="entry name" value="Type I PLP-dependent aspartate aminotransferase-like (Major domain)"/>
    <property type="match status" value="1"/>
</dbReference>
<dbReference type="InterPro" id="IPR000277">
    <property type="entry name" value="Cys/Met-Metab_PyrdxlP-dep_enz"/>
</dbReference>
<dbReference type="InterPro" id="IPR054542">
    <property type="entry name" value="Cys_met_metab_PP"/>
</dbReference>
<dbReference type="InterPro" id="IPR015424">
    <property type="entry name" value="PyrdxlP-dep_Trfase"/>
</dbReference>
<dbReference type="InterPro" id="IPR015421">
    <property type="entry name" value="PyrdxlP-dep_Trfase_major"/>
</dbReference>
<dbReference type="InterPro" id="IPR015422">
    <property type="entry name" value="PyrdxlP-dep_Trfase_small"/>
</dbReference>
<dbReference type="NCBIfam" id="NF005976">
    <property type="entry name" value="PRK08064.1"/>
    <property type="match status" value="1"/>
</dbReference>
<dbReference type="PANTHER" id="PTHR11808:SF50">
    <property type="entry name" value="CYSTATHIONINE BETA-LYASE"/>
    <property type="match status" value="1"/>
</dbReference>
<dbReference type="PANTHER" id="PTHR11808">
    <property type="entry name" value="TRANS-SULFURATION ENZYME FAMILY MEMBER"/>
    <property type="match status" value="1"/>
</dbReference>
<dbReference type="Pfam" id="PF01053">
    <property type="entry name" value="Cys_Met_Meta_PP"/>
    <property type="match status" value="1"/>
</dbReference>
<dbReference type="PIRSF" id="PIRSF001434">
    <property type="entry name" value="CGS"/>
    <property type="match status" value="1"/>
</dbReference>
<dbReference type="SUPFAM" id="SSF53383">
    <property type="entry name" value="PLP-dependent transferases"/>
    <property type="match status" value="1"/>
</dbReference>
<dbReference type="PROSITE" id="PS00868">
    <property type="entry name" value="CYS_MET_METAB_PP"/>
    <property type="match status" value="1"/>
</dbReference>
<accession>O31632</accession>
<organism>
    <name type="scientific">Bacillus subtilis (strain 168)</name>
    <dbReference type="NCBI Taxonomy" id="224308"/>
    <lineage>
        <taxon>Bacteria</taxon>
        <taxon>Bacillati</taxon>
        <taxon>Bacillota</taxon>
        <taxon>Bacilli</taxon>
        <taxon>Bacillales</taxon>
        <taxon>Bacillaceae</taxon>
        <taxon>Bacillus</taxon>
    </lineage>
</organism>
<proteinExistence type="evidence at protein level"/>
<feature type="chain" id="PRO_0000360655" description="Cystathionine beta-lyase MetC">
    <location>
        <begin position="1"/>
        <end position="390"/>
    </location>
</feature>
<feature type="modified residue" description="N6-(pyridoxal phosphate)lysine" evidence="1">
    <location>
        <position position="200"/>
    </location>
</feature>
<name>METC_BACSU</name>
<gene>
    <name type="primary">metC</name>
    <name type="synonym">yjcJ</name>
    <name type="ordered locus">BSU11880</name>
</gene>
<evidence type="ECO:0000250" key="1"/>
<evidence type="ECO:0000269" key="2">
    <source>
    </source>
</evidence>
<evidence type="ECO:0000269" key="3">
    <source>
    </source>
</evidence>
<evidence type="ECO:0000305" key="4"/>
<evidence type="ECO:0000305" key="5">
    <source>
    </source>
</evidence>
<protein>
    <recommendedName>
        <fullName>Cystathionine beta-lyase MetC</fullName>
        <shortName>CBL</shortName>
        <ecNumber>4.4.1.13</ecNumber>
    </recommendedName>
    <alternativeName>
        <fullName>Beta-cystathionase MetC</fullName>
    </alternativeName>
    <alternativeName>
        <fullName>Cysteine lyase MetC</fullName>
    </alternativeName>
    <alternativeName>
        <fullName>Cysteine-S-conjugate beta-lyase MetC</fullName>
    </alternativeName>
</protein>
<reference key="1">
    <citation type="journal article" date="1997" name="Nature">
        <title>The complete genome sequence of the Gram-positive bacterium Bacillus subtilis.</title>
        <authorList>
            <person name="Kunst F."/>
            <person name="Ogasawara N."/>
            <person name="Moszer I."/>
            <person name="Albertini A.M."/>
            <person name="Alloni G."/>
            <person name="Azevedo V."/>
            <person name="Bertero M.G."/>
            <person name="Bessieres P."/>
            <person name="Bolotin A."/>
            <person name="Borchert S."/>
            <person name="Borriss R."/>
            <person name="Boursier L."/>
            <person name="Brans A."/>
            <person name="Braun M."/>
            <person name="Brignell S.C."/>
            <person name="Bron S."/>
            <person name="Brouillet S."/>
            <person name="Bruschi C.V."/>
            <person name="Caldwell B."/>
            <person name="Capuano V."/>
            <person name="Carter N.M."/>
            <person name="Choi S.-K."/>
            <person name="Codani J.-J."/>
            <person name="Connerton I.F."/>
            <person name="Cummings N.J."/>
            <person name="Daniel R.A."/>
            <person name="Denizot F."/>
            <person name="Devine K.M."/>
            <person name="Duesterhoeft A."/>
            <person name="Ehrlich S.D."/>
            <person name="Emmerson P.T."/>
            <person name="Entian K.-D."/>
            <person name="Errington J."/>
            <person name="Fabret C."/>
            <person name="Ferrari E."/>
            <person name="Foulger D."/>
            <person name="Fritz C."/>
            <person name="Fujita M."/>
            <person name="Fujita Y."/>
            <person name="Fuma S."/>
            <person name="Galizzi A."/>
            <person name="Galleron N."/>
            <person name="Ghim S.-Y."/>
            <person name="Glaser P."/>
            <person name="Goffeau A."/>
            <person name="Golightly E.J."/>
            <person name="Grandi G."/>
            <person name="Guiseppi G."/>
            <person name="Guy B.J."/>
            <person name="Haga K."/>
            <person name="Haiech J."/>
            <person name="Harwood C.R."/>
            <person name="Henaut A."/>
            <person name="Hilbert H."/>
            <person name="Holsappel S."/>
            <person name="Hosono S."/>
            <person name="Hullo M.-F."/>
            <person name="Itaya M."/>
            <person name="Jones L.-M."/>
            <person name="Joris B."/>
            <person name="Karamata D."/>
            <person name="Kasahara Y."/>
            <person name="Klaerr-Blanchard M."/>
            <person name="Klein C."/>
            <person name="Kobayashi Y."/>
            <person name="Koetter P."/>
            <person name="Koningstein G."/>
            <person name="Krogh S."/>
            <person name="Kumano M."/>
            <person name="Kurita K."/>
            <person name="Lapidus A."/>
            <person name="Lardinois S."/>
            <person name="Lauber J."/>
            <person name="Lazarevic V."/>
            <person name="Lee S.-M."/>
            <person name="Levine A."/>
            <person name="Liu H."/>
            <person name="Masuda S."/>
            <person name="Mauel C."/>
            <person name="Medigue C."/>
            <person name="Medina N."/>
            <person name="Mellado R.P."/>
            <person name="Mizuno M."/>
            <person name="Moestl D."/>
            <person name="Nakai S."/>
            <person name="Noback M."/>
            <person name="Noone D."/>
            <person name="O'Reilly M."/>
            <person name="Ogawa K."/>
            <person name="Ogiwara A."/>
            <person name="Oudega B."/>
            <person name="Park S.-H."/>
            <person name="Parro V."/>
            <person name="Pohl T.M."/>
            <person name="Portetelle D."/>
            <person name="Porwollik S."/>
            <person name="Prescott A.M."/>
            <person name="Presecan E."/>
            <person name="Pujic P."/>
            <person name="Purnelle B."/>
            <person name="Rapoport G."/>
            <person name="Rey M."/>
            <person name="Reynolds S."/>
            <person name="Rieger M."/>
            <person name="Rivolta C."/>
            <person name="Rocha E."/>
            <person name="Roche B."/>
            <person name="Rose M."/>
            <person name="Sadaie Y."/>
            <person name="Sato T."/>
            <person name="Scanlan E."/>
            <person name="Schleich S."/>
            <person name="Schroeter R."/>
            <person name="Scoffone F."/>
            <person name="Sekiguchi J."/>
            <person name="Sekowska A."/>
            <person name="Seror S.J."/>
            <person name="Serror P."/>
            <person name="Shin B.-S."/>
            <person name="Soldo B."/>
            <person name="Sorokin A."/>
            <person name="Tacconi E."/>
            <person name="Takagi T."/>
            <person name="Takahashi H."/>
            <person name="Takemaru K."/>
            <person name="Takeuchi M."/>
            <person name="Tamakoshi A."/>
            <person name="Tanaka T."/>
            <person name="Terpstra P."/>
            <person name="Tognoni A."/>
            <person name="Tosato V."/>
            <person name="Uchiyama S."/>
            <person name="Vandenbol M."/>
            <person name="Vannier F."/>
            <person name="Vassarotti A."/>
            <person name="Viari A."/>
            <person name="Wambutt R."/>
            <person name="Wedler E."/>
            <person name="Wedler H."/>
            <person name="Weitzenegger T."/>
            <person name="Winters P."/>
            <person name="Wipat A."/>
            <person name="Yamamoto H."/>
            <person name="Yamane K."/>
            <person name="Yasumoto K."/>
            <person name="Yata K."/>
            <person name="Yoshida K."/>
            <person name="Yoshikawa H.-F."/>
            <person name="Zumstein E."/>
            <person name="Yoshikawa H."/>
            <person name="Danchin A."/>
        </authorList>
    </citation>
    <scope>NUCLEOTIDE SEQUENCE [LARGE SCALE GENOMIC DNA]</scope>
    <source>
        <strain>168</strain>
    </source>
</reference>
<reference key="2">
    <citation type="journal article" date="2002" name="Microbiology">
        <title>The metIC operon involved in methionine biosynthesis in Bacillus subtilis is controlled by transcription antitermination.</title>
        <authorList>
            <person name="Auger S."/>
            <person name="Yuen W.H."/>
            <person name="Danchin A."/>
            <person name="Martin-Verstraete I."/>
        </authorList>
    </citation>
    <scope>CATALYTIC ACTIVITY</scope>
    <scope>FUNCTION</scope>
    <scope>COFACTOR</scope>
    <scope>DISRUPTION PHENOTYPE</scope>
    <scope>INDUCTION</scope>
    <source>
        <strain>168</strain>
    </source>
</reference>
<reference key="3">
    <citation type="journal article" date="2005" name="Biochimie">
        <title>The PatB protein of Bacillus subtilis is a C-S-lyase.</title>
        <authorList>
            <person name="Auger S."/>
            <person name="Gomez M.P."/>
            <person name="Danchin A."/>
            <person name="Martin-Verstraete I."/>
        </authorList>
    </citation>
    <scope>BIOPHYSICOCHEMICAL PROPERTIES</scope>
    <scope>FUNCTION</scope>
    <scope>DISRUPTION PHENOTYPE</scope>
    <source>
        <strain>168</strain>
    </source>
</reference>
<comment type="function">
    <text evidence="2 3">Catalyzes the transformation of cystathionine into homocysteine. Also exhibits cysteine desulfhydrase activity in vitro, producing sulfide from cysteine.</text>
</comment>
<comment type="catalytic activity">
    <reaction evidence="2">
        <text>L,L-cystathionine + H2O = L-homocysteine + pyruvate + NH4(+)</text>
        <dbReference type="Rhea" id="RHEA:13965"/>
        <dbReference type="ChEBI" id="CHEBI:15361"/>
        <dbReference type="ChEBI" id="CHEBI:15377"/>
        <dbReference type="ChEBI" id="CHEBI:28938"/>
        <dbReference type="ChEBI" id="CHEBI:58161"/>
        <dbReference type="ChEBI" id="CHEBI:58199"/>
    </reaction>
</comment>
<comment type="catalytic activity">
    <reaction>
        <text>an S-substituted L-cysteine + H2O = a thiol + pyruvate + NH4(+)</text>
        <dbReference type="Rhea" id="RHEA:18121"/>
        <dbReference type="ChEBI" id="CHEBI:15361"/>
        <dbReference type="ChEBI" id="CHEBI:15377"/>
        <dbReference type="ChEBI" id="CHEBI:28938"/>
        <dbReference type="ChEBI" id="CHEBI:29256"/>
        <dbReference type="ChEBI" id="CHEBI:58717"/>
        <dbReference type="EC" id="4.4.1.13"/>
    </reaction>
</comment>
<comment type="cofactor">
    <cofactor evidence="5">
        <name>pyridoxal 5'-phosphate</name>
        <dbReference type="ChEBI" id="CHEBI:597326"/>
    </cofactor>
</comment>
<comment type="biophysicochemical properties">
    <kinetics>
        <KM evidence="3">0.64 mM for cystathionine</KM>
    </kinetics>
</comment>
<comment type="pathway">
    <text>Amino-acid biosynthesis; L-methionine biosynthesis via de novo pathway; L-homocysteine from L-cystathionine: step 1/1.</text>
</comment>
<comment type="subunit">
    <text evidence="1">Homotetramer.</text>
</comment>
<comment type="subcellular location">
    <subcellularLocation>
        <location evidence="1">Cytoplasm</location>
    </subcellularLocation>
</comment>
<comment type="induction">
    <text evidence="2">Up-regulated at the transcriptional level when sulfate, cysteine, cystathionine or homocysteine are the sulfur sources. Repressed by methionine.</text>
</comment>
<comment type="disruption phenotype">
    <text evidence="2 3">Cells lacking this gene grow as well as the wild-type in the presence of sulfate, cysteine, homocysteine or methionine as sole sulfur source, but do not grow in the presence of cystathionine.</text>
</comment>
<comment type="similarity">
    <text evidence="4">Belongs to the trans-sulfuration enzymes family.</text>
</comment>